<evidence type="ECO:0000255" key="1"/>
<evidence type="ECO:0000269" key="2">
    <source>
    </source>
</evidence>
<evidence type="ECO:0000269" key="3">
    <source>
    </source>
</evidence>
<evidence type="ECO:0000269" key="4">
    <source>
    </source>
</evidence>
<evidence type="ECO:0000269" key="5">
    <source>
    </source>
</evidence>
<evidence type="ECO:0000305" key="6"/>
<evidence type="ECO:0007744" key="7">
    <source>
    </source>
</evidence>
<dbReference type="EMBL" id="U28373">
    <property type="protein sequence ID" value="AAB64820.1"/>
    <property type="molecule type" value="Genomic_DNA"/>
</dbReference>
<dbReference type="EMBL" id="U32274">
    <property type="protein sequence ID" value="AAB64826.1"/>
    <property type="molecule type" value="Genomic_DNA"/>
</dbReference>
<dbReference type="EMBL" id="BK006938">
    <property type="protein sequence ID" value="DAA12228.1"/>
    <property type="molecule type" value="Genomic_DNA"/>
</dbReference>
<dbReference type="PIR" id="S61179">
    <property type="entry name" value="S61179"/>
</dbReference>
<dbReference type="RefSeq" id="NP_010672.1">
    <property type="nucleotide sequence ID" value="NM_001180692.1"/>
</dbReference>
<dbReference type="SMR" id="Q12359"/>
<dbReference type="BioGRID" id="32445">
    <property type="interactions" value="27"/>
</dbReference>
<dbReference type="DIP" id="DIP-4513N"/>
<dbReference type="FunCoup" id="Q12359">
    <property type="interactions" value="79"/>
</dbReference>
<dbReference type="IntAct" id="Q12359">
    <property type="interactions" value="2"/>
</dbReference>
<dbReference type="MINT" id="Q12359"/>
<dbReference type="STRING" id="4932.YDR384C"/>
<dbReference type="TCDB" id="2.A.96.1.5">
    <property type="family name" value="the acetate uptake transporter (acetr) family"/>
</dbReference>
<dbReference type="iPTMnet" id="Q12359"/>
<dbReference type="PaxDb" id="4932-YDR384C"/>
<dbReference type="PeptideAtlas" id="Q12359"/>
<dbReference type="PRIDE" id="Q12359"/>
<dbReference type="TopDownProteomics" id="Q12359"/>
<dbReference type="EnsemblFungi" id="YDR384C_mRNA">
    <property type="protein sequence ID" value="YDR384C"/>
    <property type="gene ID" value="YDR384C"/>
</dbReference>
<dbReference type="GeneID" id="851992"/>
<dbReference type="KEGG" id="sce:YDR384C"/>
<dbReference type="AGR" id="SGD:S000002792"/>
<dbReference type="SGD" id="S000002792">
    <property type="gene designation" value="ATO3"/>
</dbReference>
<dbReference type="VEuPathDB" id="FungiDB:YDR384C"/>
<dbReference type="eggNOG" id="ENOG502QSVX">
    <property type="taxonomic scope" value="Eukaryota"/>
</dbReference>
<dbReference type="GeneTree" id="ENSGT00940000176398"/>
<dbReference type="HOGENOM" id="CLU_051062_0_0_1"/>
<dbReference type="InParanoid" id="Q12359"/>
<dbReference type="OMA" id="CINTDQF"/>
<dbReference type="OrthoDB" id="3648309at2759"/>
<dbReference type="BioCyc" id="YEAST:G3O-29932-MONOMER"/>
<dbReference type="BioGRID-ORCS" id="851992">
    <property type="hits" value="0 hits in 10 CRISPR screens"/>
</dbReference>
<dbReference type="PRO" id="PR:Q12359"/>
<dbReference type="Proteomes" id="UP000002311">
    <property type="component" value="Chromosome IV"/>
</dbReference>
<dbReference type="RNAct" id="Q12359">
    <property type="molecule type" value="protein"/>
</dbReference>
<dbReference type="GO" id="GO:0071944">
    <property type="term" value="C:cell periphery"/>
    <property type="evidence" value="ECO:0007005"/>
    <property type="project" value="SGD"/>
</dbReference>
<dbReference type="GO" id="GO:0005739">
    <property type="term" value="C:mitochondrion"/>
    <property type="evidence" value="ECO:0007005"/>
    <property type="project" value="SGD"/>
</dbReference>
<dbReference type="GO" id="GO:0005886">
    <property type="term" value="C:plasma membrane"/>
    <property type="evidence" value="ECO:0000314"/>
    <property type="project" value="SGD"/>
</dbReference>
<dbReference type="GO" id="GO:0015123">
    <property type="term" value="F:acetate transmembrane transporter activity"/>
    <property type="evidence" value="ECO:0000318"/>
    <property type="project" value="GO_Central"/>
</dbReference>
<dbReference type="GO" id="GO:0008519">
    <property type="term" value="F:ammonium channel activity"/>
    <property type="evidence" value="ECO:0000315"/>
    <property type="project" value="SGD"/>
</dbReference>
<dbReference type="GO" id="GO:0072488">
    <property type="term" value="P:ammonium transmembrane transport"/>
    <property type="evidence" value="ECO:0000315"/>
    <property type="project" value="SGD"/>
</dbReference>
<dbReference type="GO" id="GO:0006811">
    <property type="term" value="P:monoatomic ion transport"/>
    <property type="evidence" value="ECO:0007669"/>
    <property type="project" value="UniProtKB-KW"/>
</dbReference>
<dbReference type="GO" id="GO:0019740">
    <property type="term" value="P:nitrogen utilization"/>
    <property type="evidence" value="ECO:0000315"/>
    <property type="project" value="SGD"/>
</dbReference>
<dbReference type="GO" id="GO:0055085">
    <property type="term" value="P:transmembrane transport"/>
    <property type="evidence" value="ECO:0000315"/>
    <property type="project" value="SGD"/>
</dbReference>
<dbReference type="InterPro" id="IPR051633">
    <property type="entry name" value="AceTr"/>
</dbReference>
<dbReference type="InterPro" id="IPR000791">
    <property type="entry name" value="Gpr1/Fun34/SatP-like"/>
</dbReference>
<dbReference type="InterPro" id="IPR047622">
    <property type="entry name" value="GPR1_FUN34_YAAH"/>
</dbReference>
<dbReference type="NCBIfam" id="NF038013">
    <property type="entry name" value="AceTr_1"/>
    <property type="match status" value="1"/>
</dbReference>
<dbReference type="PANTHER" id="PTHR31123">
    <property type="entry name" value="ACCUMULATION OF DYADS PROTEIN 2-RELATED"/>
    <property type="match status" value="1"/>
</dbReference>
<dbReference type="PANTHER" id="PTHR31123:SF3">
    <property type="entry name" value="AMMONIA TRANSPORT OUTWARD PROTEIN 3"/>
    <property type="match status" value="1"/>
</dbReference>
<dbReference type="Pfam" id="PF01184">
    <property type="entry name" value="Gpr1_Fun34_YaaH"/>
    <property type="match status" value="1"/>
</dbReference>
<dbReference type="PROSITE" id="PS01114">
    <property type="entry name" value="GPR1_FUN34_YAAH"/>
    <property type="match status" value="1"/>
</dbReference>
<reference key="1">
    <citation type="journal article" date="1997" name="Nature">
        <title>The nucleotide sequence of Saccharomyces cerevisiae chromosome IV.</title>
        <authorList>
            <person name="Jacq C."/>
            <person name="Alt-Moerbe J."/>
            <person name="Andre B."/>
            <person name="Arnold W."/>
            <person name="Bahr A."/>
            <person name="Ballesta J.P.G."/>
            <person name="Bargues M."/>
            <person name="Baron L."/>
            <person name="Becker A."/>
            <person name="Biteau N."/>
            <person name="Bloecker H."/>
            <person name="Blugeon C."/>
            <person name="Boskovic J."/>
            <person name="Brandt P."/>
            <person name="Brueckner M."/>
            <person name="Buitrago M.J."/>
            <person name="Coster F."/>
            <person name="Delaveau T."/>
            <person name="del Rey F."/>
            <person name="Dujon B."/>
            <person name="Eide L.G."/>
            <person name="Garcia-Cantalejo J.M."/>
            <person name="Goffeau A."/>
            <person name="Gomez-Peris A."/>
            <person name="Granotier C."/>
            <person name="Hanemann V."/>
            <person name="Hankeln T."/>
            <person name="Hoheisel J.D."/>
            <person name="Jaeger W."/>
            <person name="Jimenez A."/>
            <person name="Jonniaux J.-L."/>
            <person name="Kraemer C."/>
            <person name="Kuester H."/>
            <person name="Laamanen P."/>
            <person name="Legros Y."/>
            <person name="Louis E.J."/>
            <person name="Moeller-Rieker S."/>
            <person name="Monnet A."/>
            <person name="Moro M."/>
            <person name="Mueller-Auer S."/>
            <person name="Nussbaumer B."/>
            <person name="Paricio N."/>
            <person name="Paulin L."/>
            <person name="Perea J."/>
            <person name="Perez-Alonso M."/>
            <person name="Perez-Ortin J.E."/>
            <person name="Pohl T.M."/>
            <person name="Prydz H."/>
            <person name="Purnelle B."/>
            <person name="Rasmussen S.W."/>
            <person name="Remacha M.A."/>
            <person name="Revuelta J.L."/>
            <person name="Rieger M."/>
            <person name="Salom D."/>
            <person name="Saluz H.P."/>
            <person name="Saiz J.E."/>
            <person name="Saren A.-M."/>
            <person name="Schaefer M."/>
            <person name="Scharfe M."/>
            <person name="Schmidt E.R."/>
            <person name="Schneider C."/>
            <person name="Scholler P."/>
            <person name="Schwarz S."/>
            <person name="Soler-Mira A."/>
            <person name="Urrestarazu L.A."/>
            <person name="Verhasselt P."/>
            <person name="Vissers S."/>
            <person name="Voet M."/>
            <person name="Volckaert G."/>
            <person name="Wagner G."/>
            <person name="Wambutt R."/>
            <person name="Wedler E."/>
            <person name="Wedler H."/>
            <person name="Woelfl S."/>
            <person name="Harris D.E."/>
            <person name="Bowman S."/>
            <person name="Brown D."/>
            <person name="Churcher C.M."/>
            <person name="Connor R."/>
            <person name="Dedman K."/>
            <person name="Gentles S."/>
            <person name="Hamlin N."/>
            <person name="Hunt S."/>
            <person name="Jones L."/>
            <person name="McDonald S."/>
            <person name="Murphy L.D."/>
            <person name="Niblett D."/>
            <person name="Odell C."/>
            <person name="Oliver K."/>
            <person name="Rajandream M.A."/>
            <person name="Richards C."/>
            <person name="Shore L."/>
            <person name="Walsh S.V."/>
            <person name="Barrell B.G."/>
            <person name="Dietrich F.S."/>
            <person name="Mulligan J.T."/>
            <person name="Allen E."/>
            <person name="Araujo R."/>
            <person name="Aviles E."/>
            <person name="Berno A."/>
            <person name="Carpenter J."/>
            <person name="Chen E."/>
            <person name="Cherry J.M."/>
            <person name="Chung E."/>
            <person name="Duncan M."/>
            <person name="Hunicke-Smith S."/>
            <person name="Hyman R.W."/>
            <person name="Komp C."/>
            <person name="Lashkari D."/>
            <person name="Lew H."/>
            <person name="Lin D."/>
            <person name="Mosedale D."/>
            <person name="Nakahara K."/>
            <person name="Namath A."/>
            <person name="Oefner P."/>
            <person name="Oh C."/>
            <person name="Petel F.X."/>
            <person name="Roberts D."/>
            <person name="Schramm S."/>
            <person name="Schroeder M."/>
            <person name="Shogren T."/>
            <person name="Shroff N."/>
            <person name="Winant A."/>
            <person name="Yelton M.A."/>
            <person name="Botstein D."/>
            <person name="Davis R.W."/>
            <person name="Johnston M."/>
            <person name="Andrews S."/>
            <person name="Brinkman R."/>
            <person name="Cooper J."/>
            <person name="Ding H."/>
            <person name="Du Z."/>
            <person name="Favello A."/>
            <person name="Fulton L."/>
            <person name="Gattung S."/>
            <person name="Greco T."/>
            <person name="Hallsworth K."/>
            <person name="Hawkins J."/>
            <person name="Hillier L.W."/>
            <person name="Jier M."/>
            <person name="Johnson D."/>
            <person name="Johnston L."/>
            <person name="Kirsten J."/>
            <person name="Kucaba T."/>
            <person name="Langston Y."/>
            <person name="Latreille P."/>
            <person name="Le T."/>
            <person name="Mardis E."/>
            <person name="Menezes S."/>
            <person name="Miller N."/>
            <person name="Nhan M."/>
            <person name="Pauley A."/>
            <person name="Peluso D."/>
            <person name="Rifkin L."/>
            <person name="Riles L."/>
            <person name="Taich A."/>
            <person name="Trevaskis E."/>
            <person name="Vignati D."/>
            <person name="Wilcox L."/>
            <person name="Wohldman P."/>
            <person name="Vaudin M."/>
            <person name="Wilson R."/>
            <person name="Waterston R."/>
            <person name="Albermann K."/>
            <person name="Hani J."/>
            <person name="Heumann K."/>
            <person name="Kleine K."/>
            <person name="Mewes H.-W."/>
            <person name="Zollner A."/>
            <person name="Zaccaria P."/>
        </authorList>
    </citation>
    <scope>NUCLEOTIDE SEQUENCE [LARGE SCALE GENOMIC DNA]</scope>
    <source>
        <strain>ATCC 204508 / S288c</strain>
    </source>
</reference>
<reference key="2">
    <citation type="journal article" date="2014" name="G3 (Bethesda)">
        <title>The reference genome sequence of Saccharomyces cerevisiae: Then and now.</title>
        <authorList>
            <person name="Engel S.R."/>
            <person name="Dietrich F.S."/>
            <person name="Fisk D.G."/>
            <person name="Binkley G."/>
            <person name="Balakrishnan R."/>
            <person name="Costanzo M.C."/>
            <person name="Dwight S.S."/>
            <person name="Hitz B.C."/>
            <person name="Karra K."/>
            <person name="Nash R.S."/>
            <person name="Weng S."/>
            <person name="Wong E.D."/>
            <person name="Lloyd P."/>
            <person name="Skrzypek M.S."/>
            <person name="Miyasato S.R."/>
            <person name="Simison M."/>
            <person name="Cherry J.M."/>
        </authorList>
    </citation>
    <scope>GENOME REANNOTATION</scope>
    <source>
        <strain>ATCC 204508 / S288c</strain>
    </source>
</reference>
<reference key="3">
    <citation type="journal article" date="2002" name="Mol. Biol. Cell">
        <title>Ammonia pulses and metabolic oscillations guide yeast colony development.</title>
        <authorList>
            <person name="Palkova Z."/>
            <person name="Devaux F."/>
            <person name="Icicova M."/>
            <person name="Minarikova L."/>
            <person name="Le Crom S."/>
            <person name="Jacq C."/>
        </authorList>
    </citation>
    <scope>FUNCTION</scope>
</reference>
<reference key="4">
    <citation type="journal article" date="2003" name="J. Biol. Chem.">
        <title>ATO3 encoding a putative outward ammonium transporter is an RTG-independent retrograde responsive gene regulated by GCN4 and the Ssy1-Ptr3-Ssy5 amino acid sensor system.</title>
        <authorList>
            <person name="Guaragnella N."/>
            <person name="Butow R.A."/>
        </authorList>
    </citation>
    <scope>INDUCTION</scope>
    <scope>SUBCELLULAR LOCATION</scope>
</reference>
<reference key="5">
    <citation type="journal article" date="2005" name="Mol. Cell. Biol.">
        <title>Combined global localization analysis and transcriptome data identify genes that are directly coregulated by Adr1 and Cat8.</title>
        <authorList>
            <person name="Tachibana C."/>
            <person name="Yoo J.Y."/>
            <person name="Tagne J.-B."/>
            <person name="Kacherovsky N."/>
            <person name="Lee T.I."/>
            <person name="Young E.T."/>
        </authorList>
    </citation>
    <scope>INDUCTION</scope>
</reference>
<reference key="6">
    <citation type="journal article" date="2006" name="Proc. Natl. Acad. Sci. U.S.A.">
        <title>A global topology map of the Saccharomyces cerevisiae membrane proteome.</title>
        <authorList>
            <person name="Kim H."/>
            <person name="Melen K."/>
            <person name="Oesterberg M."/>
            <person name="von Heijne G."/>
        </authorList>
    </citation>
    <scope>TOPOLOGY [LARGE SCALE ANALYSIS]</scope>
    <source>
        <strain>ATCC 208353 / W303-1A</strain>
    </source>
</reference>
<reference key="7">
    <citation type="journal article" date="2007" name="Biochim. Biophys. Acta">
        <title>Association of putative ammonium exporters Ato with detergent-resistant compartments of plasma membrane during yeast colony development: pH affects Ato1p localisation in patches.</title>
        <authorList>
            <person name="Ricicova M."/>
            <person name="Kucerova H."/>
            <person name="Vachova L."/>
            <person name="Palkova Z."/>
        </authorList>
    </citation>
    <scope>SUBCELLULAR LOCATION</scope>
    <scope>INDUCTION</scope>
</reference>
<reference key="8">
    <citation type="journal article" date="2007" name="Mol. Cell. Proteomics">
        <title>Profiling phosphoproteins of yeast mitochondria reveals a role of phosphorylation in assembly of the ATP synthase.</title>
        <authorList>
            <person name="Reinders J."/>
            <person name="Wagner K."/>
            <person name="Zahedi R.P."/>
            <person name="Stojanovski D."/>
            <person name="Eyrich B."/>
            <person name="van der Laan M."/>
            <person name="Rehling P."/>
            <person name="Sickmann A."/>
            <person name="Pfanner N."/>
            <person name="Meisinger C."/>
        </authorList>
    </citation>
    <scope>PHOSPHORYLATION [LARGE SCALE ANALYSIS] AT SER-4</scope>
    <scope>IDENTIFICATION BY MASS SPECTROMETRY [LARGE SCALE ANALYSIS]</scope>
    <source>
        <strain>ATCC 76625 / YPH499</strain>
    </source>
</reference>
<reference key="9">
    <citation type="journal article" date="2008" name="Mol. Cell. Proteomics">
        <title>A multidimensional chromatography technology for in-depth phosphoproteome analysis.</title>
        <authorList>
            <person name="Albuquerque C.P."/>
            <person name="Smolka M.B."/>
            <person name="Payne S.H."/>
            <person name="Bafna V."/>
            <person name="Eng J."/>
            <person name="Zhou H."/>
        </authorList>
    </citation>
    <scope>IDENTIFICATION BY MASS SPECTROMETRY [LARGE SCALE ANALYSIS]</scope>
</reference>
<name>ATO3_YEAST</name>
<protein>
    <recommendedName>
        <fullName>Ammonia transport outward protein 3</fullName>
    </recommendedName>
</protein>
<comment type="function">
    <text evidence="2">Transporter protein required for ammonia export. Induced in rho(0) cells, probably to eliminate the excess ammonia that arises because of a potential defect in ammonia assimilation in those cells.</text>
</comment>
<comment type="subcellular location">
    <subcellularLocation>
        <location evidence="3 5">Cell membrane</location>
        <topology evidence="3 5">Multi-pass membrane protein</topology>
    </subcellularLocation>
    <text>Localizes to large detergent resistant patches of the cell membrane (DRM) enriched in ergosterol and sphingolipids.</text>
</comment>
<comment type="induction">
    <text evidence="3 4 5">Expression is under the control of the ADR1, CAT8, and GCN4 transcription factors. Also induced by external ammonia and in rho(0) cells.</text>
</comment>
<comment type="similarity">
    <text evidence="6">Belongs to the acetate uptake transporter (AceTr) (TC 2.A.96) family.</text>
</comment>
<organism>
    <name type="scientific">Saccharomyces cerevisiae (strain ATCC 204508 / S288c)</name>
    <name type="common">Baker's yeast</name>
    <dbReference type="NCBI Taxonomy" id="559292"/>
    <lineage>
        <taxon>Eukaryota</taxon>
        <taxon>Fungi</taxon>
        <taxon>Dikarya</taxon>
        <taxon>Ascomycota</taxon>
        <taxon>Saccharomycotina</taxon>
        <taxon>Saccharomycetes</taxon>
        <taxon>Saccharomycetales</taxon>
        <taxon>Saccharomycetaceae</taxon>
        <taxon>Saccharomyces</taxon>
    </lineage>
</organism>
<gene>
    <name type="primary">ATO3</name>
    <name type="ordered locus">YDR384C</name>
    <name type="ORF">D9481.20</name>
    <name type="ORF">D9509.4</name>
</gene>
<sequence>MTSSASSPQDLEKGVNTLENIETLPQQGSIAGVSQGFPNIQEIYSDRDFITLGSSTYRRRDLLNALDRGDGEEGNCAKYTPHQFANPVPLGLASFSLSCLVLSLINANVRGVTDGKWALSLFMFFGGAIELFAGLLCFVIGDTYAMTVFSSFGGFWICYGYGLTDTDNLVSGYTDPTMLNNVIGFFLAGWTVFTFLMLMCTLKSTWGLFLLLTFLDLTFLLLCIGTFIDNNNLKMAGGYFGILSSCCGWYSLYCSVVSPSNSYLAFRAHTMPNAP</sequence>
<feature type="chain" id="PRO_0000135707" description="Ammonia transport outward protein 3">
    <location>
        <begin position="1"/>
        <end position="275"/>
    </location>
</feature>
<feature type="topological domain" description="Extracellular" evidence="1">
    <location>
        <begin position="1"/>
        <end position="84"/>
    </location>
</feature>
<feature type="transmembrane region" description="Helical" evidence="1">
    <location>
        <begin position="85"/>
        <end position="105"/>
    </location>
</feature>
<feature type="topological domain" description="Cytoplasmic" evidence="1">
    <location>
        <begin position="106"/>
        <end position="120"/>
    </location>
</feature>
<feature type="transmembrane region" description="Helical" evidence="1">
    <location>
        <begin position="121"/>
        <end position="141"/>
    </location>
</feature>
<feature type="topological domain" description="Extracellular" evidence="1">
    <location>
        <begin position="142"/>
        <end position="181"/>
    </location>
</feature>
<feature type="transmembrane region" description="Helical" evidence="1">
    <location>
        <begin position="182"/>
        <end position="202"/>
    </location>
</feature>
<feature type="topological domain" description="Cytoplasmic" evidence="1">
    <location>
        <begin position="203"/>
        <end position="207"/>
    </location>
</feature>
<feature type="transmembrane region" description="Helical" evidence="1">
    <location>
        <begin position="208"/>
        <end position="228"/>
    </location>
</feature>
<feature type="topological domain" description="Extracellular" evidence="1">
    <location>
        <begin position="229"/>
        <end position="236"/>
    </location>
</feature>
<feature type="transmembrane region" description="Helical" evidence="1">
    <location>
        <begin position="237"/>
        <end position="257"/>
    </location>
</feature>
<feature type="topological domain" description="Cytoplasmic" evidence="1">
    <location>
        <begin position="258"/>
        <end position="275"/>
    </location>
</feature>
<feature type="modified residue" description="Phosphoserine" evidence="7">
    <location>
        <position position="4"/>
    </location>
</feature>
<proteinExistence type="evidence at protein level"/>
<keyword id="KW-0924">Ammonia transport</keyword>
<keyword id="KW-1003">Cell membrane</keyword>
<keyword id="KW-0406">Ion transport</keyword>
<keyword id="KW-0472">Membrane</keyword>
<keyword id="KW-0597">Phosphoprotein</keyword>
<keyword id="KW-1185">Reference proteome</keyword>
<keyword id="KW-0812">Transmembrane</keyword>
<keyword id="KW-1133">Transmembrane helix</keyword>
<keyword id="KW-0813">Transport</keyword>
<accession>Q12359</accession>
<accession>D6VT18</accession>